<geneLocation type="plasmid">
    <name>sym pNGR234a</name>
</geneLocation>
<dbReference type="EMBL" id="U00090">
    <property type="protein sequence ID" value="AAB91943.1"/>
    <property type="molecule type" value="Genomic_DNA"/>
</dbReference>
<dbReference type="RefSeq" id="NP_444156.1">
    <property type="nucleotide sequence ID" value="NC_000914.2"/>
</dbReference>
<dbReference type="RefSeq" id="WP_010875110.1">
    <property type="nucleotide sequence ID" value="NC_000914.2"/>
</dbReference>
<dbReference type="SMR" id="P55712"/>
<dbReference type="TCDB" id="1.B.22.6.1">
    <property type="family name" value="the outer bacterial membrane secretin (secretin) family"/>
</dbReference>
<dbReference type="KEGG" id="rhi:NGR_a00690"/>
<dbReference type="eggNOG" id="COG1450">
    <property type="taxonomic scope" value="Bacteria"/>
</dbReference>
<dbReference type="HOGENOM" id="CLU_109356_0_0_5"/>
<dbReference type="OrthoDB" id="9775455at2"/>
<dbReference type="Proteomes" id="UP000001054">
    <property type="component" value="Plasmid pNGR234a"/>
</dbReference>
<dbReference type="GO" id="GO:0016020">
    <property type="term" value="C:membrane"/>
    <property type="evidence" value="ECO:0007669"/>
    <property type="project" value="UniProtKB-SubCell"/>
</dbReference>
<dbReference type="Gene3D" id="3.30.1370.120">
    <property type="match status" value="1"/>
</dbReference>
<dbReference type="Gene3D" id="3.55.50.30">
    <property type="match status" value="1"/>
</dbReference>
<dbReference type="InterPro" id="IPR005644">
    <property type="entry name" value="NolW-like"/>
</dbReference>
<dbReference type="InterPro" id="IPR038591">
    <property type="entry name" value="NolW-like_sf"/>
</dbReference>
<dbReference type="Pfam" id="PF03958">
    <property type="entry name" value="Secretin_N"/>
    <property type="match status" value="1"/>
</dbReference>
<organism>
    <name type="scientific">Sinorhizobium fredii (strain NBRC 101917 / NGR234)</name>
    <dbReference type="NCBI Taxonomy" id="394"/>
    <lineage>
        <taxon>Bacteria</taxon>
        <taxon>Pseudomonadati</taxon>
        <taxon>Pseudomonadota</taxon>
        <taxon>Alphaproteobacteria</taxon>
        <taxon>Hyphomicrobiales</taxon>
        <taxon>Rhizobiaceae</taxon>
        <taxon>Sinorhizobium/Ensifer group</taxon>
        <taxon>Sinorhizobium</taxon>
    </lineage>
</organism>
<accession>P55712</accession>
<keyword id="KW-0472">Membrane</keyword>
<keyword id="KW-0536">Nodulation</keyword>
<keyword id="KW-0614">Plasmid</keyword>
<keyword id="KW-1185">Reference proteome</keyword>
<keyword id="KW-0812">Transmembrane</keyword>
<keyword id="KW-1133">Transmembrane helix</keyword>
<sequence length="234" mass="25847">MPTTPIPFTPLHMFRRLLCVGLFLFAGIHTTLGATLPLPSTSYKYTVLDQDLSAALQEFGNNLKISVNISAEVKGRIRGRIPELSPREFLDRLTDLYDLQWYYDGVVLYVSAAKEAQTRMLVLSSVHFSAFKLALDKLDISDERYPVRPAPGNGLVLVSGPPRFMALIEQTLNGLLAVAQAQPRATDTPARESVMVLFRGSSTTVVRGGRPEVFYTSEMLPENDDGGKAELSKK</sequence>
<evidence type="ECO:0000255" key="1"/>
<evidence type="ECO:0000305" key="2"/>
<name>NOLW_SINFN</name>
<gene>
    <name type="primary">nolW</name>
    <name type="ordered locus">NGR_a00690</name>
    <name type="ORF">y4yD</name>
</gene>
<protein>
    <recommendedName>
        <fullName>Nodulation protein NolW</fullName>
    </recommendedName>
</protein>
<proteinExistence type="predicted"/>
<reference key="1">
    <citation type="journal article" date="1997" name="Nature">
        <title>Molecular basis of symbiosis between Rhizobium and legumes.</title>
        <authorList>
            <person name="Freiberg C.A."/>
            <person name="Fellay R."/>
            <person name="Bairoch A."/>
            <person name="Broughton W.J."/>
            <person name="Rosenthal A."/>
            <person name="Perret X."/>
        </authorList>
    </citation>
    <scope>NUCLEOTIDE SEQUENCE [LARGE SCALE GENOMIC DNA]</scope>
    <source>
        <strain>NBRC 101917 / NGR234</strain>
    </source>
</reference>
<reference key="2">
    <citation type="journal article" date="2009" name="Appl. Environ. Microbiol.">
        <title>Rhizobium sp. strain NGR234 possesses a remarkable number of secretion systems.</title>
        <authorList>
            <person name="Schmeisser C."/>
            <person name="Liesegang H."/>
            <person name="Krysciak D."/>
            <person name="Bakkou N."/>
            <person name="Le Quere A."/>
            <person name="Wollherr A."/>
            <person name="Heinemeyer I."/>
            <person name="Morgenstern B."/>
            <person name="Pommerening-Roeser A."/>
            <person name="Flores M."/>
            <person name="Palacios R."/>
            <person name="Brenner S."/>
            <person name="Gottschalk G."/>
            <person name="Schmitz R.A."/>
            <person name="Broughton W.J."/>
            <person name="Perret X."/>
            <person name="Strittmatter A.W."/>
            <person name="Streit W.R."/>
        </authorList>
    </citation>
    <scope>NUCLEOTIDE SEQUENCE [LARGE SCALE GENOMIC DNA]</scope>
    <source>
        <strain>NBRC 101917 / NGR234</strain>
    </source>
</reference>
<feature type="chain" id="PRO_0000209455" description="Nodulation protein NolW">
    <location>
        <begin position="1"/>
        <end position="234"/>
    </location>
</feature>
<feature type="transmembrane region" description="Helical" evidence="1">
    <location>
        <begin position="17"/>
        <end position="38"/>
    </location>
</feature>
<comment type="subcellular location">
    <subcellularLocation>
        <location evidence="2">Membrane</location>
        <topology evidence="2">Single-pass membrane protein</topology>
    </subcellularLocation>
</comment>